<organism>
    <name type="scientific">Escherichia coli O157:H7</name>
    <dbReference type="NCBI Taxonomy" id="83334"/>
    <lineage>
        <taxon>Bacteria</taxon>
        <taxon>Pseudomonadati</taxon>
        <taxon>Pseudomonadota</taxon>
        <taxon>Gammaproteobacteria</taxon>
        <taxon>Enterobacterales</taxon>
        <taxon>Enterobacteriaceae</taxon>
        <taxon>Escherichia</taxon>
    </lineage>
</organism>
<protein>
    <recommendedName>
        <fullName>Trk system potassium uptake protein TrkA</fullName>
        <shortName>K(+)-uptake protein TrkA</shortName>
    </recommendedName>
</protein>
<name>TRKA_ECO57</name>
<feature type="chain" id="PRO_0000148713" description="Trk system potassium uptake protein TrkA">
    <location>
        <begin position="1"/>
        <end position="458"/>
    </location>
</feature>
<feature type="domain" description="RCK N-terminal 1" evidence="3">
    <location>
        <begin position="1"/>
        <end position="123"/>
    </location>
</feature>
<feature type="domain" description="RCK C-terminal 1" evidence="4">
    <location>
        <begin position="143"/>
        <end position="227"/>
    </location>
</feature>
<feature type="domain" description="RCK N-terminal 2" evidence="3">
    <location>
        <begin position="232"/>
        <end position="348"/>
    </location>
</feature>
<feature type="domain" description="RCK C-terminal 2" evidence="4">
    <location>
        <begin position="368"/>
        <end position="453"/>
    </location>
</feature>
<feature type="binding site" description="in other chain" evidence="1">
    <location>
        <begin position="7"/>
        <end position="11"/>
    </location>
    <ligand>
        <name>NAD(+)</name>
        <dbReference type="ChEBI" id="CHEBI:57540"/>
        <label>1</label>
        <note>ligand shared between dimeric partners</note>
    </ligand>
</feature>
<feature type="binding site" description="in other chain" evidence="1">
    <location>
        <position position="30"/>
    </location>
    <ligand>
        <name>NAD(+)</name>
        <dbReference type="ChEBI" id="CHEBI:57540"/>
        <label>1</label>
        <note>ligand shared between dimeric partners</note>
    </ligand>
</feature>
<feature type="binding site" description="in other chain" evidence="1">
    <location>
        <begin position="73"/>
        <end position="74"/>
    </location>
    <ligand>
        <name>NAD(+)</name>
        <dbReference type="ChEBI" id="CHEBI:57540"/>
        <label>1</label>
        <note>ligand shared between dimeric partners</note>
    </ligand>
</feature>
<feature type="binding site" evidence="1">
    <location>
        <position position="98"/>
    </location>
    <ligand>
        <name>NAD(+)</name>
        <dbReference type="ChEBI" id="CHEBI:57540"/>
        <label>1</label>
        <note>ligand shared between dimeric partners</note>
    </ligand>
</feature>
<feature type="binding site" evidence="2">
    <location>
        <begin position="234"/>
        <end position="262"/>
    </location>
    <ligand>
        <name>NAD(+)</name>
        <dbReference type="ChEBI" id="CHEBI:57540"/>
        <label>2</label>
    </ligand>
</feature>
<proteinExistence type="inferred from homology"/>
<sequence>MKIIILGAGQVGGTLAENLVGENNDITVVDTNGERLRTLQDKFDLRVVQGHGSHPRVLREAGADDADMLVAVTSSDETNMVACQVAYSLFNTPNRIARIRSPDYVRDADKLFHSDAVPIDHLIAPEQLVIDNIYRLIEYPGALQVVNFAEGKVSLAVVKAYYGGPLIGNALSTMREHMPHIDTRVAAIFRHDRPIRPQGSTIVEAGDEVFFIAASQHIRAVMSELQRLEKPYKRIMLVGGGNIGAGLARRLEKDYSVKLIERNQQRAAELAEKLQNTIVFFGDASDQELLAEEHIDQVDLFIAVTNDDEANIMSAMLAKRMGAKKVMVLIQRRAYVDLVQGSVIDIAISPQQATISALLSHVRKADIVGVSSLRRGVAEAIEAVAHGDESTSRVVGRVIDEIKLPPGTIIGAVVRGNDVMIANDNLRIEQGDHVIMFLTDKKFITDVERLFQPSPFFL</sequence>
<gene>
    <name type="primary">trkA</name>
    <name type="ordered locus">Z4660</name>
    <name type="ordered locus">ECs4155</name>
</gene>
<keyword id="KW-0997">Cell inner membrane</keyword>
<keyword id="KW-1003">Cell membrane</keyword>
<keyword id="KW-0406">Ion transport</keyword>
<keyword id="KW-0472">Membrane</keyword>
<keyword id="KW-0520">NAD</keyword>
<keyword id="KW-0630">Potassium</keyword>
<keyword id="KW-0633">Potassium transport</keyword>
<keyword id="KW-1185">Reference proteome</keyword>
<keyword id="KW-0677">Repeat</keyword>
<keyword id="KW-0813">Transport</keyword>
<accession>P0AGJ0</accession>
<accession>P23868</accession>
<accession>P77041</accession>
<evidence type="ECO:0000250" key="1"/>
<evidence type="ECO:0000255" key="2"/>
<evidence type="ECO:0000255" key="3">
    <source>
        <dbReference type="PROSITE-ProRule" id="PRU00543"/>
    </source>
</evidence>
<evidence type="ECO:0000255" key="4">
    <source>
        <dbReference type="PROSITE-ProRule" id="PRU00544"/>
    </source>
</evidence>
<reference key="1">
    <citation type="journal article" date="2001" name="Nature">
        <title>Genome sequence of enterohaemorrhagic Escherichia coli O157:H7.</title>
        <authorList>
            <person name="Perna N.T."/>
            <person name="Plunkett G. III"/>
            <person name="Burland V."/>
            <person name="Mau B."/>
            <person name="Glasner J.D."/>
            <person name="Rose D.J."/>
            <person name="Mayhew G.F."/>
            <person name="Evans P.S."/>
            <person name="Gregor J."/>
            <person name="Kirkpatrick H.A."/>
            <person name="Posfai G."/>
            <person name="Hackett J."/>
            <person name="Klink S."/>
            <person name="Boutin A."/>
            <person name="Shao Y."/>
            <person name="Miller L."/>
            <person name="Grotbeck E.J."/>
            <person name="Davis N.W."/>
            <person name="Lim A."/>
            <person name="Dimalanta E.T."/>
            <person name="Potamousis K."/>
            <person name="Apodaca J."/>
            <person name="Anantharaman T.S."/>
            <person name="Lin J."/>
            <person name="Yen G."/>
            <person name="Schwartz D.C."/>
            <person name="Welch R.A."/>
            <person name="Blattner F.R."/>
        </authorList>
    </citation>
    <scope>NUCLEOTIDE SEQUENCE [LARGE SCALE GENOMIC DNA]</scope>
    <source>
        <strain>O157:H7 / EDL933 / ATCC 700927 / EHEC</strain>
    </source>
</reference>
<reference key="2">
    <citation type="journal article" date="2001" name="DNA Res.">
        <title>Complete genome sequence of enterohemorrhagic Escherichia coli O157:H7 and genomic comparison with a laboratory strain K-12.</title>
        <authorList>
            <person name="Hayashi T."/>
            <person name="Makino K."/>
            <person name="Ohnishi M."/>
            <person name="Kurokawa K."/>
            <person name="Ishii K."/>
            <person name="Yokoyama K."/>
            <person name="Han C.-G."/>
            <person name="Ohtsubo E."/>
            <person name="Nakayama K."/>
            <person name="Murata T."/>
            <person name="Tanaka M."/>
            <person name="Tobe T."/>
            <person name="Iida T."/>
            <person name="Takami H."/>
            <person name="Honda T."/>
            <person name="Sasakawa C."/>
            <person name="Ogasawara N."/>
            <person name="Yasunaga T."/>
            <person name="Kuhara S."/>
            <person name="Shiba T."/>
            <person name="Hattori M."/>
            <person name="Shinagawa H."/>
        </authorList>
    </citation>
    <scope>NUCLEOTIDE SEQUENCE [LARGE SCALE GENOMIC DNA]</scope>
    <source>
        <strain>O157:H7 / Sakai / RIMD 0509952 / EHEC</strain>
    </source>
</reference>
<dbReference type="EMBL" id="AE005174">
    <property type="protein sequence ID" value="AAG58411.1"/>
    <property type="molecule type" value="Genomic_DNA"/>
</dbReference>
<dbReference type="EMBL" id="BA000007">
    <property type="protein sequence ID" value="BAB37578.1"/>
    <property type="molecule type" value="Genomic_DNA"/>
</dbReference>
<dbReference type="PIR" id="C91148">
    <property type="entry name" value="C91148"/>
</dbReference>
<dbReference type="PIR" id="G85993">
    <property type="entry name" value="G85993"/>
</dbReference>
<dbReference type="RefSeq" id="NP_312182.1">
    <property type="nucleotide sequence ID" value="NC_002695.1"/>
</dbReference>
<dbReference type="RefSeq" id="WP_000691382.1">
    <property type="nucleotide sequence ID" value="NZ_VOAI01000041.1"/>
</dbReference>
<dbReference type="SMR" id="P0AGJ0"/>
<dbReference type="STRING" id="155864.Z4660"/>
<dbReference type="GeneID" id="915986"/>
<dbReference type="GeneID" id="93778698"/>
<dbReference type="KEGG" id="ece:Z4660"/>
<dbReference type="KEGG" id="ecs:ECs_4155"/>
<dbReference type="PATRIC" id="fig|386585.9.peg.4338"/>
<dbReference type="eggNOG" id="COG0569">
    <property type="taxonomic scope" value="Bacteria"/>
</dbReference>
<dbReference type="HOGENOM" id="CLU_046525_0_2_6"/>
<dbReference type="OMA" id="IACQVAY"/>
<dbReference type="Proteomes" id="UP000000558">
    <property type="component" value="Chromosome"/>
</dbReference>
<dbReference type="Proteomes" id="UP000002519">
    <property type="component" value="Chromosome"/>
</dbReference>
<dbReference type="GO" id="GO:0005886">
    <property type="term" value="C:plasma membrane"/>
    <property type="evidence" value="ECO:0007669"/>
    <property type="project" value="UniProtKB-SubCell"/>
</dbReference>
<dbReference type="GO" id="GO:0015079">
    <property type="term" value="F:potassium ion transmembrane transporter activity"/>
    <property type="evidence" value="ECO:0007669"/>
    <property type="project" value="InterPro"/>
</dbReference>
<dbReference type="FunFam" id="3.30.70.1450:FF:000001">
    <property type="entry name" value="Trk system potassium transporter TrkA"/>
    <property type="match status" value="1"/>
</dbReference>
<dbReference type="FunFam" id="3.30.70.1450:FF:000002">
    <property type="entry name" value="Trk system potassium transporter TrkA"/>
    <property type="match status" value="1"/>
</dbReference>
<dbReference type="FunFam" id="3.40.50.720:FF:000027">
    <property type="entry name" value="Trk system potassium transporter TrkA"/>
    <property type="match status" value="1"/>
</dbReference>
<dbReference type="FunFam" id="3.40.50.720:FF:000042">
    <property type="entry name" value="Trk system potassium transporter TrkA"/>
    <property type="match status" value="1"/>
</dbReference>
<dbReference type="Gene3D" id="3.40.50.720">
    <property type="entry name" value="NAD(P)-binding Rossmann-like Domain"/>
    <property type="match status" value="2"/>
</dbReference>
<dbReference type="Gene3D" id="3.30.70.1450">
    <property type="entry name" value="Regulator of K+ conductance, C-terminal domain"/>
    <property type="match status" value="2"/>
</dbReference>
<dbReference type="InterPro" id="IPR006036">
    <property type="entry name" value="K_uptake_TrkA"/>
</dbReference>
<dbReference type="InterPro" id="IPR036291">
    <property type="entry name" value="NAD(P)-bd_dom_sf"/>
</dbReference>
<dbReference type="InterPro" id="IPR006037">
    <property type="entry name" value="RCK_C"/>
</dbReference>
<dbReference type="InterPro" id="IPR036721">
    <property type="entry name" value="RCK_C_sf"/>
</dbReference>
<dbReference type="InterPro" id="IPR003148">
    <property type="entry name" value="RCK_N"/>
</dbReference>
<dbReference type="InterPro" id="IPR050721">
    <property type="entry name" value="Trk_Ktr_HKT_K-transport"/>
</dbReference>
<dbReference type="NCBIfam" id="NF007030">
    <property type="entry name" value="PRK09496.1-1"/>
    <property type="match status" value="1"/>
</dbReference>
<dbReference type="NCBIfam" id="NF007031">
    <property type="entry name" value="PRK09496.1-2"/>
    <property type="match status" value="1"/>
</dbReference>
<dbReference type="NCBIfam" id="NF007032">
    <property type="entry name" value="PRK09496.1-4"/>
    <property type="match status" value="1"/>
</dbReference>
<dbReference type="NCBIfam" id="NF007039">
    <property type="entry name" value="PRK09496.3-2"/>
    <property type="match status" value="1"/>
</dbReference>
<dbReference type="PANTHER" id="PTHR43833">
    <property type="entry name" value="POTASSIUM CHANNEL PROTEIN 2-RELATED-RELATED"/>
    <property type="match status" value="1"/>
</dbReference>
<dbReference type="PANTHER" id="PTHR43833:SF5">
    <property type="entry name" value="TRK SYSTEM POTASSIUM UPTAKE PROTEIN TRKA"/>
    <property type="match status" value="1"/>
</dbReference>
<dbReference type="Pfam" id="PF02080">
    <property type="entry name" value="TrkA_C"/>
    <property type="match status" value="2"/>
</dbReference>
<dbReference type="Pfam" id="PF02254">
    <property type="entry name" value="TrkA_N"/>
    <property type="match status" value="2"/>
</dbReference>
<dbReference type="PRINTS" id="PR00335">
    <property type="entry name" value="KUPTAKETRKA"/>
</dbReference>
<dbReference type="SUPFAM" id="SSF51735">
    <property type="entry name" value="NAD(P)-binding Rossmann-fold domains"/>
    <property type="match status" value="2"/>
</dbReference>
<dbReference type="SUPFAM" id="SSF116726">
    <property type="entry name" value="TrkA C-terminal domain-like"/>
    <property type="match status" value="2"/>
</dbReference>
<dbReference type="PROSITE" id="PS51202">
    <property type="entry name" value="RCK_C"/>
    <property type="match status" value="2"/>
</dbReference>
<dbReference type="PROSITE" id="PS51201">
    <property type="entry name" value="RCK_N"/>
    <property type="match status" value="2"/>
</dbReference>
<comment type="function">
    <text evidence="1">Part of the constitutive potassium transport systems TrkG and TrkH. May regulate the transport activity of TrkG and TrkH systems. Binds to NAD(+) and NADH (By similarity).</text>
</comment>
<comment type="subcellular location">
    <subcellularLocation>
        <location evidence="1">Cell inner membrane</location>
        <topology evidence="1">Peripheral membrane protein</topology>
        <orientation evidence="1">Cytoplasmic side</orientation>
    </subcellularLocation>
    <text evidence="1">Peripherally bound to the inner side of the inner membrane via the TrkG and TrkH proteins.</text>
</comment>
<comment type="domain">
    <text evidence="1">The RCK N-terminal domain binds NAD and possibly other effectors. This is expected to cause a conformation change that regulates potassium transport (By similarity).</text>
</comment>